<gene>
    <name type="primary">AIM11</name>
    <name type="ordered locus">ZYRO0B03102g</name>
</gene>
<accession>C5DQU6</accession>
<proteinExistence type="inferred from homology"/>
<evidence type="ECO:0000255" key="1"/>
<evidence type="ECO:0000305" key="2"/>
<keyword id="KW-0472">Membrane</keyword>
<keyword id="KW-1185">Reference proteome</keyword>
<keyword id="KW-0812">Transmembrane</keyword>
<keyword id="KW-1133">Transmembrane helix</keyword>
<reference key="1">
    <citation type="journal article" date="2009" name="Genome Res.">
        <title>Comparative genomics of protoploid Saccharomycetaceae.</title>
        <authorList>
            <consortium name="The Genolevures Consortium"/>
            <person name="Souciet J.-L."/>
            <person name="Dujon B."/>
            <person name="Gaillardin C."/>
            <person name="Johnston M."/>
            <person name="Baret P.V."/>
            <person name="Cliften P."/>
            <person name="Sherman D.J."/>
            <person name="Weissenbach J."/>
            <person name="Westhof E."/>
            <person name="Wincker P."/>
            <person name="Jubin C."/>
            <person name="Poulain J."/>
            <person name="Barbe V."/>
            <person name="Segurens B."/>
            <person name="Artiguenave F."/>
            <person name="Anthouard V."/>
            <person name="Vacherie B."/>
            <person name="Val M.-E."/>
            <person name="Fulton R.S."/>
            <person name="Minx P."/>
            <person name="Wilson R."/>
            <person name="Durrens P."/>
            <person name="Jean G."/>
            <person name="Marck C."/>
            <person name="Martin T."/>
            <person name="Nikolski M."/>
            <person name="Rolland T."/>
            <person name="Seret M.-L."/>
            <person name="Casaregola S."/>
            <person name="Despons L."/>
            <person name="Fairhead C."/>
            <person name="Fischer G."/>
            <person name="Lafontaine I."/>
            <person name="Leh V."/>
            <person name="Lemaire M."/>
            <person name="de Montigny J."/>
            <person name="Neuveglise C."/>
            <person name="Thierry A."/>
            <person name="Blanc-Lenfle I."/>
            <person name="Bleykasten C."/>
            <person name="Diffels J."/>
            <person name="Fritsch E."/>
            <person name="Frangeul L."/>
            <person name="Goeffon A."/>
            <person name="Jauniaux N."/>
            <person name="Kachouri-Lafond R."/>
            <person name="Payen C."/>
            <person name="Potier S."/>
            <person name="Pribylova L."/>
            <person name="Ozanne C."/>
            <person name="Richard G.-F."/>
            <person name="Sacerdot C."/>
            <person name="Straub M.-L."/>
            <person name="Talla E."/>
        </authorList>
    </citation>
    <scope>NUCLEOTIDE SEQUENCE [LARGE SCALE GENOMIC DNA]</scope>
    <source>
        <strain>ATCC 2623 / CBS 732 / BCRC 21506 / NBRC 1130 / NCYC 568 / NRRL Y-229</strain>
    </source>
</reference>
<organism>
    <name type="scientific">Zygosaccharomyces rouxii (strain ATCC 2623 / CBS 732 / NBRC 1130 / NCYC 568 / NRRL Y-229)</name>
    <dbReference type="NCBI Taxonomy" id="559307"/>
    <lineage>
        <taxon>Eukaryota</taxon>
        <taxon>Fungi</taxon>
        <taxon>Dikarya</taxon>
        <taxon>Ascomycota</taxon>
        <taxon>Saccharomycotina</taxon>
        <taxon>Saccharomycetes</taxon>
        <taxon>Saccharomycetales</taxon>
        <taxon>Saccharomycetaceae</taxon>
        <taxon>Zygosaccharomyces</taxon>
    </lineage>
</organism>
<feature type="chain" id="PRO_0000405660" description="Altered inheritance of mitochondria protein 11">
    <location>
        <begin position="1"/>
        <end position="145"/>
    </location>
</feature>
<feature type="transmembrane region" description="Helical" evidence="1">
    <location>
        <begin position="26"/>
        <end position="48"/>
    </location>
</feature>
<feature type="transmembrane region" description="Helical" evidence="1">
    <location>
        <begin position="76"/>
        <end position="98"/>
    </location>
</feature>
<dbReference type="EMBL" id="CU928174">
    <property type="protein sequence ID" value="CAR26157.1"/>
    <property type="molecule type" value="Genomic_DNA"/>
</dbReference>
<dbReference type="RefSeq" id="XP_002495090.1">
    <property type="nucleotide sequence ID" value="XM_002495045.1"/>
</dbReference>
<dbReference type="FunCoup" id="C5DQU6">
    <property type="interactions" value="34"/>
</dbReference>
<dbReference type="GeneID" id="8202230"/>
<dbReference type="KEGG" id="zro:ZYRO0B03102g"/>
<dbReference type="HOGENOM" id="CLU_118700_0_0_1"/>
<dbReference type="InParanoid" id="C5DQU6"/>
<dbReference type="Proteomes" id="UP000008536">
    <property type="component" value="Chromosome B"/>
</dbReference>
<dbReference type="GO" id="GO:0016020">
    <property type="term" value="C:membrane"/>
    <property type="evidence" value="ECO:0007669"/>
    <property type="project" value="UniProtKB-SubCell"/>
</dbReference>
<dbReference type="GO" id="GO:0005739">
    <property type="term" value="C:mitochondrion"/>
    <property type="evidence" value="ECO:0007669"/>
    <property type="project" value="TreeGrafter"/>
</dbReference>
<dbReference type="InterPro" id="IPR038814">
    <property type="entry name" value="AIM11"/>
</dbReference>
<dbReference type="PANTHER" id="PTHR39136">
    <property type="entry name" value="ALTERED INHERITANCE OF MITOCHONDRIA PROTEIN 11"/>
    <property type="match status" value="1"/>
</dbReference>
<dbReference type="PANTHER" id="PTHR39136:SF1">
    <property type="entry name" value="ALTERED INHERITANCE OF MITOCHONDRIA PROTEIN 11"/>
    <property type="match status" value="1"/>
</dbReference>
<protein>
    <recommendedName>
        <fullName>Altered inheritance of mitochondria protein 11</fullName>
    </recommendedName>
</protein>
<sequence>MNNVQFSERQISAFSHEYKIRRKRQMLRFFCATALTLVSCRVAYRGMLGRKYIPNMFQLNYKPPPFSYKGEAASALVLGTGLATGGLTMMVFGGCWIADISTFPEFSYKLKRLMGQESDSSQLPMDTETSQIVNQLEQLLNNDKK</sequence>
<name>AIM11_ZYGRC</name>
<comment type="subcellular location">
    <subcellularLocation>
        <location evidence="2">Membrane</location>
        <topology evidence="2">Multi-pass membrane protein</topology>
    </subcellularLocation>
</comment>
<comment type="similarity">
    <text evidence="2">Belongs to the AIM11 family.</text>
</comment>